<dbReference type="EC" id="2.7.11.1"/>
<dbReference type="EMBL" id="AY653733">
    <property type="protein sequence ID" value="AAQ09579.2"/>
    <property type="molecule type" value="Genomic_DNA"/>
</dbReference>
<dbReference type="SMR" id="Q7T6Y1"/>
<dbReference type="KEGG" id="vg:9925058"/>
<dbReference type="OrthoDB" id="8955at10239"/>
<dbReference type="Proteomes" id="UP000001134">
    <property type="component" value="Genome"/>
</dbReference>
<dbReference type="GO" id="GO:0005524">
    <property type="term" value="F:ATP binding"/>
    <property type="evidence" value="ECO:0007669"/>
    <property type="project" value="UniProtKB-KW"/>
</dbReference>
<dbReference type="GO" id="GO:0106310">
    <property type="term" value="F:protein serine kinase activity"/>
    <property type="evidence" value="ECO:0007669"/>
    <property type="project" value="RHEA"/>
</dbReference>
<dbReference type="GO" id="GO:0004674">
    <property type="term" value="F:protein serine/threonine kinase activity"/>
    <property type="evidence" value="ECO:0007669"/>
    <property type="project" value="UniProtKB-KW"/>
</dbReference>
<dbReference type="CDD" id="cd14014">
    <property type="entry name" value="STKc_PknB_like"/>
    <property type="match status" value="1"/>
</dbReference>
<dbReference type="Gene3D" id="1.10.510.10">
    <property type="entry name" value="Transferase(Phosphotransferase) domain 1"/>
    <property type="match status" value="1"/>
</dbReference>
<dbReference type="InterPro" id="IPR011009">
    <property type="entry name" value="Kinase-like_dom_sf"/>
</dbReference>
<dbReference type="InterPro" id="IPR000719">
    <property type="entry name" value="Prot_kinase_dom"/>
</dbReference>
<dbReference type="InterPro" id="IPR008271">
    <property type="entry name" value="Ser/Thr_kinase_AS"/>
</dbReference>
<dbReference type="PANTHER" id="PTHR24345:SF0">
    <property type="entry name" value="CELL CYCLE SERINE_THREONINE-PROTEIN KINASE CDC5_MSD2"/>
    <property type="match status" value="1"/>
</dbReference>
<dbReference type="PANTHER" id="PTHR24345">
    <property type="entry name" value="SERINE/THREONINE-PROTEIN KINASE PLK"/>
    <property type="match status" value="1"/>
</dbReference>
<dbReference type="Pfam" id="PF00069">
    <property type="entry name" value="Pkinase"/>
    <property type="match status" value="1"/>
</dbReference>
<dbReference type="PIRSF" id="PIRSF000654">
    <property type="entry name" value="Integrin-linked_kinase"/>
    <property type="match status" value="1"/>
</dbReference>
<dbReference type="SMART" id="SM00220">
    <property type="entry name" value="S_TKc"/>
    <property type="match status" value="1"/>
</dbReference>
<dbReference type="SUPFAM" id="SSF56112">
    <property type="entry name" value="Protein kinase-like (PK-like)"/>
    <property type="match status" value="1"/>
</dbReference>
<dbReference type="PROSITE" id="PS50011">
    <property type="entry name" value="PROTEIN_KINASE_DOM"/>
    <property type="match status" value="1"/>
</dbReference>
<dbReference type="PROSITE" id="PS00108">
    <property type="entry name" value="PROTEIN_KINASE_ST"/>
    <property type="match status" value="1"/>
</dbReference>
<name>YR436_MIMIV</name>
<organismHost>
    <name type="scientific">Acanthamoeba polyphaga</name>
    <name type="common">Amoeba</name>
    <dbReference type="NCBI Taxonomy" id="5757"/>
</organismHost>
<organism>
    <name type="scientific">Acanthamoeba polyphaga mimivirus</name>
    <name type="common">APMV</name>
    <dbReference type="NCBI Taxonomy" id="212035"/>
    <lineage>
        <taxon>Viruses</taxon>
        <taxon>Varidnaviria</taxon>
        <taxon>Bamfordvirae</taxon>
        <taxon>Nucleocytoviricota</taxon>
        <taxon>Megaviricetes</taxon>
        <taxon>Imitervirales</taxon>
        <taxon>Mimiviridae</taxon>
        <taxon>Megamimivirinae</taxon>
        <taxon>Mimivirus</taxon>
        <taxon>Mimivirus bradfordmassiliense</taxon>
    </lineage>
</organism>
<proteinExistence type="inferred from homology"/>
<gene>
    <name type="ordered locus">MIMI_R436</name>
</gene>
<protein>
    <recommendedName>
        <fullName>Putative serine/threonine-protein kinase R436</fullName>
        <ecNumber>2.7.11.1</ecNumber>
    </recommendedName>
</protein>
<reference key="1">
    <citation type="journal article" date="2004" name="Science">
        <title>The 1.2-megabase genome sequence of Mimivirus.</title>
        <authorList>
            <person name="Raoult D."/>
            <person name="Audic S."/>
            <person name="Robert C."/>
            <person name="Abergel C."/>
            <person name="Renesto P."/>
            <person name="Ogata H."/>
            <person name="La Scola B."/>
            <person name="Susan M."/>
            <person name="Claverie J.-M."/>
        </authorList>
    </citation>
    <scope>NUCLEOTIDE SEQUENCE [LARGE SCALE GENOMIC DNA]</scope>
    <source>
        <strain>Rowbotham-Bradford</strain>
    </source>
</reference>
<accession>Q7T6Y1</accession>
<evidence type="ECO:0000255" key="1">
    <source>
        <dbReference type="PROSITE-ProRule" id="PRU00159"/>
    </source>
</evidence>
<evidence type="ECO:0000255" key="2">
    <source>
        <dbReference type="PROSITE-ProRule" id="PRU10027"/>
    </source>
</evidence>
<feature type="chain" id="PRO_0000086849" description="Putative serine/threonine-protein kinase R436">
    <location>
        <begin position="1"/>
        <end position="276"/>
    </location>
</feature>
<feature type="domain" description="Protein kinase" evidence="1">
    <location>
        <begin position="6"/>
        <end position="266"/>
    </location>
</feature>
<feature type="active site" description="Proton acceptor" evidence="1 2">
    <location>
        <position position="132"/>
    </location>
</feature>
<feature type="binding site" evidence="1">
    <location>
        <begin position="12"/>
        <end position="20"/>
    </location>
    <ligand>
        <name>ATP</name>
        <dbReference type="ChEBI" id="CHEBI:30616"/>
    </ligand>
</feature>
<feature type="binding site" evidence="1">
    <location>
        <position position="35"/>
    </location>
    <ligand>
        <name>ATP</name>
        <dbReference type="ChEBI" id="CHEBI:30616"/>
    </ligand>
</feature>
<sequence>MIFSNYSLDKLIQNRKSKRIFIGTDTITLQKVVIKIYDDKNKSKESILRDIHIPSILNHPNIIKIKDYVEDLDSNKMYVIYPYIDNTISLRNLPVDKFDVTDLFKLYYIIDILIQVVDAISYMHDNNIVHRDIKPDNILLNDKVHLIDFDLSDQLDNPKFPVRKGTIGTPNFMAPEIWWKINQVDYKKTDIYSLGITMYYLLNKRKLPYKAKKYSELEYQIANHKPKISNSGYPELDKLIMKIIDKDPQNRPTISEIKQKLNHFKTIVDTRVNFNE</sequence>
<keyword id="KW-0067">ATP-binding</keyword>
<keyword id="KW-0418">Kinase</keyword>
<keyword id="KW-0547">Nucleotide-binding</keyword>
<keyword id="KW-1185">Reference proteome</keyword>
<keyword id="KW-0723">Serine/threonine-protein kinase</keyword>
<keyword id="KW-0808">Transferase</keyword>
<comment type="catalytic activity">
    <reaction>
        <text>L-seryl-[protein] + ATP = O-phospho-L-seryl-[protein] + ADP + H(+)</text>
        <dbReference type="Rhea" id="RHEA:17989"/>
        <dbReference type="Rhea" id="RHEA-COMP:9863"/>
        <dbReference type="Rhea" id="RHEA-COMP:11604"/>
        <dbReference type="ChEBI" id="CHEBI:15378"/>
        <dbReference type="ChEBI" id="CHEBI:29999"/>
        <dbReference type="ChEBI" id="CHEBI:30616"/>
        <dbReference type="ChEBI" id="CHEBI:83421"/>
        <dbReference type="ChEBI" id="CHEBI:456216"/>
        <dbReference type="EC" id="2.7.11.1"/>
    </reaction>
</comment>
<comment type="catalytic activity">
    <reaction>
        <text>L-threonyl-[protein] + ATP = O-phospho-L-threonyl-[protein] + ADP + H(+)</text>
        <dbReference type="Rhea" id="RHEA:46608"/>
        <dbReference type="Rhea" id="RHEA-COMP:11060"/>
        <dbReference type="Rhea" id="RHEA-COMP:11605"/>
        <dbReference type="ChEBI" id="CHEBI:15378"/>
        <dbReference type="ChEBI" id="CHEBI:30013"/>
        <dbReference type="ChEBI" id="CHEBI:30616"/>
        <dbReference type="ChEBI" id="CHEBI:61977"/>
        <dbReference type="ChEBI" id="CHEBI:456216"/>
        <dbReference type="EC" id="2.7.11.1"/>
    </reaction>
</comment>
<comment type="similarity">
    <text evidence="1">Belongs to the protein kinase superfamily. Ser/Thr protein kinase family.</text>
</comment>